<reference key="1">
    <citation type="journal article" date="2005" name="Proc. Natl. Acad. Sci. U.S.A.">
        <title>Genome analysis of multiple pathogenic isolates of Streptococcus agalactiae: implications for the microbial 'pan-genome'.</title>
        <authorList>
            <person name="Tettelin H."/>
            <person name="Masignani V."/>
            <person name="Cieslewicz M.J."/>
            <person name="Donati C."/>
            <person name="Medini D."/>
            <person name="Ward N.L."/>
            <person name="Angiuoli S.V."/>
            <person name="Crabtree J."/>
            <person name="Jones A.L."/>
            <person name="Durkin A.S."/>
            <person name="DeBoy R.T."/>
            <person name="Davidsen T.M."/>
            <person name="Mora M."/>
            <person name="Scarselli M."/>
            <person name="Margarit y Ros I."/>
            <person name="Peterson J.D."/>
            <person name="Hauser C.R."/>
            <person name="Sundaram J.P."/>
            <person name="Nelson W.C."/>
            <person name="Madupu R."/>
            <person name="Brinkac L.M."/>
            <person name="Dodson R.J."/>
            <person name="Rosovitz M.J."/>
            <person name="Sullivan S.A."/>
            <person name="Daugherty S.C."/>
            <person name="Haft D.H."/>
            <person name="Selengut J."/>
            <person name="Gwinn M.L."/>
            <person name="Zhou L."/>
            <person name="Zafar N."/>
            <person name="Khouri H."/>
            <person name="Radune D."/>
            <person name="Dimitrov G."/>
            <person name="Watkins K."/>
            <person name="O'Connor K.J."/>
            <person name="Smith S."/>
            <person name="Utterback T.R."/>
            <person name="White O."/>
            <person name="Rubens C.E."/>
            <person name="Grandi G."/>
            <person name="Madoff L.C."/>
            <person name="Kasper D.L."/>
            <person name="Telford J.L."/>
            <person name="Wessels M.R."/>
            <person name="Rappuoli R."/>
            <person name="Fraser C.M."/>
        </authorList>
    </citation>
    <scope>NUCLEOTIDE SEQUENCE [LARGE SCALE GENOMIC DNA]</scope>
    <source>
        <strain>ATCC 27591 / A909 / CDC SS700</strain>
    </source>
</reference>
<evidence type="ECO:0000255" key="1">
    <source>
        <dbReference type="HAMAP-Rule" id="MF_00639"/>
    </source>
</evidence>
<protein>
    <recommendedName>
        <fullName evidence="1">UDP-N-acetylmuramoylalanine--D-glutamate ligase</fullName>
        <ecNumber evidence="1">6.3.2.9</ecNumber>
    </recommendedName>
    <alternativeName>
        <fullName evidence="1">D-glutamic acid-adding enzyme</fullName>
    </alternativeName>
    <alternativeName>
        <fullName evidence="1">UDP-N-acetylmuramoyl-L-alanyl-D-glutamate synthetase</fullName>
    </alternativeName>
</protein>
<proteinExistence type="inferred from homology"/>
<sequence>MKTITTFENKKVLVLGLARSGEAAARLLAKLGAIVTVNDGKPFDENPTAQSLLEEGIKVVCGSHPLELLDEDFCYMIKNPGIPYNNPMVKKALEKQIPVLTEVELAYLVSESQLIGITGSNGKTTTTTMIAEVLNAGGQRGLLAGNIGFPASEVVQAANDKDTLVMELSSFQLMGVKEFRPHIAVITNLMPTHLDYHGSFEDYVAAKWNIQNQMSSSDFLVLNFNQGISKELAKTTKATIVPFSTTEKVDGAYVQDKQLFYKGENIMSVDDIGVPGSHNVENALATIAVAKLAGISNQVIRETLSNFGGVKHRLQSLGKVHGISFYNDSKSTNILATQKALSGFDNTKVILIAGGLDRGNEFDELIPDITGLKHMVVLGESASRVKRAAQKAGVTYSDALDVRDAVHKAYEVAQQGDVILLSPANASWDMYKNFEVRGDEFIDTFESLRGE</sequence>
<feature type="chain" id="PRO_0000257246" description="UDP-N-acetylmuramoylalanine--D-glutamate ligase">
    <location>
        <begin position="1"/>
        <end position="451"/>
    </location>
</feature>
<feature type="binding site" evidence="1">
    <location>
        <begin position="119"/>
        <end position="125"/>
    </location>
    <ligand>
        <name>ATP</name>
        <dbReference type="ChEBI" id="CHEBI:30616"/>
    </ligand>
</feature>
<keyword id="KW-0067">ATP-binding</keyword>
<keyword id="KW-0131">Cell cycle</keyword>
<keyword id="KW-0132">Cell division</keyword>
<keyword id="KW-0133">Cell shape</keyword>
<keyword id="KW-0961">Cell wall biogenesis/degradation</keyword>
<keyword id="KW-0963">Cytoplasm</keyword>
<keyword id="KW-0436">Ligase</keyword>
<keyword id="KW-0547">Nucleotide-binding</keyword>
<keyword id="KW-0573">Peptidoglycan synthesis</keyword>
<name>MURD_STRA1</name>
<accession>Q3K2P4</accession>
<organism>
    <name type="scientific">Streptococcus agalactiae serotype Ia (strain ATCC 27591 / A909 / CDC SS700)</name>
    <dbReference type="NCBI Taxonomy" id="205921"/>
    <lineage>
        <taxon>Bacteria</taxon>
        <taxon>Bacillati</taxon>
        <taxon>Bacillota</taxon>
        <taxon>Bacilli</taxon>
        <taxon>Lactobacillales</taxon>
        <taxon>Streptococcaceae</taxon>
        <taxon>Streptococcus</taxon>
    </lineage>
</organism>
<dbReference type="EC" id="6.3.2.9" evidence="1"/>
<dbReference type="EMBL" id="CP000114">
    <property type="protein sequence ID" value="ABA45627.1"/>
    <property type="molecule type" value="Genomic_DNA"/>
</dbReference>
<dbReference type="RefSeq" id="WP_000849681.1">
    <property type="nucleotide sequence ID" value="NC_007432.1"/>
</dbReference>
<dbReference type="SMR" id="Q3K2P4"/>
<dbReference type="KEGG" id="sak:SAK_0577"/>
<dbReference type="HOGENOM" id="CLU_032540_0_1_9"/>
<dbReference type="UniPathway" id="UPA00219"/>
<dbReference type="GO" id="GO:0005737">
    <property type="term" value="C:cytoplasm"/>
    <property type="evidence" value="ECO:0007669"/>
    <property type="project" value="UniProtKB-SubCell"/>
</dbReference>
<dbReference type="GO" id="GO:0005524">
    <property type="term" value="F:ATP binding"/>
    <property type="evidence" value="ECO:0007669"/>
    <property type="project" value="UniProtKB-UniRule"/>
</dbReference>
<dbReference type="GO" id="GO:0008764">
    <property type="term" value="F:UDP-N-acetylmuramoylalanine-D-glutamate ligase activity"/>
    <property type="evidence" value="ECO:0007669"/>
    <property type="project" value="UniProtKB-UniRule"/>
</dbReference>
<dbReference type="GO" id="GO:0051301">
    <property type="term" value="P:cell division"/>
    <property type="evidence" value="ECO:0007669"/>
    <property type="project" value="UniProtKB-KW"/>
</dbReference>
<dbReference type="GO" id="GO:0071555">
    <property type="term" value="P:cell wall organization"/>
    <property type="evidence" value="ECO:0007669"/>
    <property type="project" value="UniProtKB-KW"/>
</dbReference>
<dbReference type="GO" id="GO:0009252">
    <property type="term" value="P:peptidoglycan biosynthetic process"/>
    <property type="evidence" value="ECO:0007669"/>
    <property type="project" value="UniProtKB-UniRule"/>
</dbReference>
<dbReference type="GO" id="GO:0008360">
    <property type="term" value="P:regulation of cell shape"/>
    <property type="evidence" value="ECO:0007669"/>
    <property type="project" value="UniProtKB-KW"/>
</dbReference>
<dbReference type="Gene3D" id="3.90.190.20">
    <property type="entry name" value="Mur ligase, C-terminal domain"/>
    <property type="match status" value="1"/>
</dbReference>
<dbReference type="Gene3D" id="3.40.1190.10">
    <property type="entry name" value="Mur-like, catalytic domain"/>
    <property type="match status" value="1"/>
</dbReference>
<dbReference type="Gene3D" id="3.40.50.720">
    <property type="entry name" value="NAD(P)-binding Rossmann-like Domain"/>
    <property type="match status" value="1"/>
</dbReference>
<dbReference type="HAMAP" id="MF_00639">
    <property type="entry name" value="MurD"/>
    <property type="match status" value="1"/>
</dbReference>
<dbReference type="InterPro" id="IPR036565">
    <property type="entry name" value="Mur-like_cat_sf"/>
</dbReference>
<dbReference type="InterPro" id="IPR004101">
    <property type="entry name" value="Mur_ligase_C"/>
</dbReference>
<dbReference type="InterPro" id="IPR036615">
    <property type="entry name" value="Mur_ligase_C_dom_sf"/>
</dbReference>
<dbReference type="InterPro" id="IPR013221">
    <property type="entry name" value="Mur_ligase_cen"/>
</dbReference>
<dbReference type="InterPro" id="IPR005762">
    <property type="entry name" value="MurD"/>
</dbReference>
<dbReference type="NCBIfam" id="TIGR01087">
    <property type="entry name" value="murD"/>
    <property type="match status" value="1"/>
</dbReference>
<dbReference type="PANTHER" id="PTHR43692">
    <property type="entry name" value="UDP-N-ACETYLMURAMOYLALANINE--D-GLUTAMATE LIGASE"/>
    <property type="match status" value="1"/>
</dbReference>
<dbReference type="PANTHER" id="PTHR43692:SF1">
    <property type="entry name" value="UDP-N-ACETYLMURAMOYLALANINE--D-GLUTAMATE LIGASE"/>
    <property type="match status" value="1"/>
</dbReference>
<dbReference type="Pfam" id="PF02875">
    <property type="entry name" value="Mur_ligase_C"/>
    <property type="match status" value="1"/>
</dbReference>
<dbReference type="Pfam" id="PF08245">
    <property type="entry name" value="Mur_ligase_M"/>
    <property type="match status" value="1"/>
</dbReference>
<dbReference type="Pfam" id="PF21799">
    <property type="entry name" value="MurD-like_N"/>
    <property type="match status" value="1"/>
</dbReference>
<dbReference type="SUPFAM" id="SSF51984">
    <property type="entry name" value="MurCD N-terminal domain"/>
    <property type="match status" value="1"/>
</dbReference>
<dbReference type="SUPFAM" id="SSF53623">
    <property type="entry name" value="MurD-like peptide ligases, catalytic domain"/>
    <property type="match status" value="1"/>
</dbReference>
<dbReference type="SUPFAM" id="SSF53244">
    <property type="entry name" value="MurD-like peptide ligases, peptide-binding domain"/>
    <property type="match status" value="1"/>
</dbReference>
<gene>
    <name evidence="1" type="primary">murD</name>
    <name type="ordered locus">SAK_0577</name>
</gene>
<comment type="function">
    <text evidence="1">Cell wall formation. Catalyzes the addition of glutamate to the nucleotide precursor UDP-N-acetylmuramoyl-L-alanine (UMA).</text>
</comment>
<comment type="catalytic activity">
    <reaction evidence="1">
        <text>UDP-N-acetyl-alpha-D-muramoyl-L-alanine + D-glutamate + ATP = UDP-N-acetyl-alpha-D-muramoyl-L-alanyl-D-glutamate + ADP + phosphate + H(+)</text>
        <dbReference type="Rhea" id="RHEA:16429"/>
        <dbReference type="ChEBI" id="CHEBI:15378"/>
        <dbReference type="ChEBI" id="CHEBI:29986"/>
        <dbReference type="ChEBI" id="CHEBI:30616"/>
        <dbReference type="ChEBI" id="CHEBI:43474"/>
        <dbReference type="ChEBI" id="CHEBI:83898"/>
        <dbReference type="ChEBI" id="CHEBI:83900"/>
        <dbReference type="ChEBI" id="CHEBI:456216"/>
        <dbReference type="EC" id="6.3.2.9"/>
    </reaction>
</comment>
<comment type="pathway">
    <text evidence="1">Cell wall biogenesis; peptidoglycan biosynthesis.</text>
</comment>
<comment type="subcellular location">
    <subcellularLocation>
        <location evidence="1">Cytoplasm</location>
    </subcellularLocation>
</comment>
<comment type="similarity">
    <text evidence="1">Belongs to the MurCDEF family.</text>
</comment>